<evidence type="ECO:0000250" key="1"/>
<evidence type="ECO:0000250" key="2">
    <source>
        <dbReference type="UniProtKB" id="O15551"/>
    </source>
</evidence>
<evidence type="ECO:0000250" key="3">
    <source>
        <dbReference type="UniProtKB" id="Q63400"/>
    </source>
</evidence>
<evidence type="ECO:0000255" key="4"/>
<evidence type="ECO:0000269" key="5">
    <source>
    </source>
</evidence>
<evidence type="ECO:0000269" key="6">
    <source>
    </source>
</evidence>
<evidence type="ECO:0000269" key="7">
    <source>
    </source>
</evidence>
<evidence type="ECO:0000269" key="8">
    <source>
    </source>
</evidence>
<evidence type="ECO:0000269" key="9">
    <source>
    </source>
</evidence>
<evidence type="ECO:0000269" key="10">
    <source>
    </source>
</evidence>
<evidence type="ECO:0000303" key="11">
    <source>
    </source>
</evidence>
<evidence type="ECO:0000305" key="12"/>
<evidence type="ECO:0007744" key="13">
    <source>
    </source>
</evidence>
<accession>Q9Z0G9</accession>
<accession>Q91X40</accession>
<proteinExistence type="evidence at protein level"/>
<feature type="chain" id="PRO_0000144739" description="Claudin-3">
    <location>
        <begin position="1"/>
        <end position="219"/>
    </location>
</feature>
<feature type="topological domain" description="Cytoplasmic" evidence="4">
    <location>
        <begin position="1"/>
        <end position="8"/>
    </location>
</feature>
<feature type="transmembrane region" description="Helical" evidence="4">
    <location>
        <begin position="9"/>
        <end position="29"/>
    </location>
</feature>
<feature type="topological domain" description="Extracellular" evidence="4">
    <location>
        <begin position="30"/>
        <end position="80"/>
    </location>
</feature>
<feature type="transmembrane region" description="Helical" evidence="4">
    <location>
        <begin position="81"/>
        <end position="101"/>
    </location>
</feature>
<feature type="topological domain" description="Cytoplasmic" evidence="4">
    <location>
        <begin position="102"/>
        <end position="115"/>
    </location>
</feature>
<feature type="transmembrane region" description="Helical" evidence="4">
    <location>
        <begin position="116"/>
        <end position="136"/>
    </location>
</feature>
<feature type="topological domain" description="Extracellular" evidence="4">
    <location>
        <begin position="137"/>
        <end position="159"/>
    </location>
</feature>
<feature type="transmembrane region" description="Helical" evidence="4">
    <location>
        <begin position="160"/>
        <end position="180"/>
    </location>
</feature>
<feature type="topological domain" description="Cytoplasmic" evidence="4">
    <location>
        <begin position="181"/>
        <end position="219"/>
    </location>
</feature>
<feature type="region of interest" description="Interactions with TJP1, TJP2 and TJP3" evidence="1">
    <location>
        <begin position="218"/>
        <end position="219"/>
    </location>
</feature>
<feature type="modified residue" description="Phosphotyrosine" evidence="13">
    <location>
        <position position="197"/>
    </location>
</feature>
<feature type="modified residue" description="Phosphoserine" evidence="3">
    <location>
        <position position="198"/>
    </location>
</feature>
<feature type="splice variant" id="VSP_001101" description="In isoform 2." evidence="11">
    <location>
        <begin position="72"/>
        <end position="91"/>
    </location>
</feature>
<sequence>MSMGLEITGTSLAVLGWLCTIVCCALPMWRVSAFIGSSIITAQITWEGLWMNCVVQSTGQMQCKMYDSLLALPQDLQAARALIVVSILLAAFGLLVALVGAQCTNCVQDETAKAKITIVAGVLFLLAALLTLVPVSWSANTIIRDFYNPLVPEAQKREMGAGLYVGWAAAALQLLGGALLCCSCPPRDKYAPTKILYSAPRSTGPGTGTGTAYDRKDYV</sequence>
<comment type="function">
    <text evidence="5">Plays a major role in tight junction-specific obliteration of the intercellular space, through calcium-independent cell-adhesion activity.</text>
</comment>
<comment type="subunit">
    <text evidence="2 6 7">Can form homo- and heteropolymers with other CLDN. Homopolymers interact with CLDN1 and CLDN2 homopolymers. Interacts in cis (within the same plasma membrane) with CLDN19. Directly interacts with TJP1/ZO-1, TJP2/ZO-2 and TJP3/ZO-3.</text>
</comment>
<comment type="subunit">
    <text evidence="9">(Microbial infection) Interacts with Clostridium perfringens enterotoxin CPE; the interaction may disrupt claudin assembly in tight junctions.</text>
</comment>
<comment type="subcellular location">
    <subcellularLocation>
        <location evidence="8 10">Cell junction</location>
        <location evidence="8 10">Tight junction</location>
    </subcellularLocation>
    <subcellularLocation>
        <location evidence="8 10">Cell membrane</location>
        <topology evidence="10">Multi-pass membrane protein</topology>
    </subcellularLocation>
</comment>
<comment type="alternative products">
    <event type="alternative splicing"/>
    <isoform>
        <id>Q9Z0G9-1</id>
        <name>1</name>
        <sequence type="displayed"/>
    </isoform>
    <isoform>
        <id>Q9Z0G9-2</id>
        <name>2</name>
        <sequence type="described" ref="VSP_001101"/>
    </isoform>
</comment>
<comment type="tissue specificity">
    <text evidence="8 10">Expressed in the lung (PubMed:24588076, PubMed:9892664). Expressed at high levels in the liver and at lower levels, in kidney and testis (PubMed:9892664).</text>
</comment>
<comment type="similarity">
    <text evidence="12">Belongs to the claudin family.</text>
</comment>
<keyword id="KW-0002">3D-structure</keyword>
<keyword id="KW-0025">Alternative splicing</keyword>
<keyword id="KW-0965">Cell junction</keyword>
<keyword id="KW-1003">Cell membrane</keyword>
<keyword id="KW-0472">Membrane</keyword>
<keyword id="KW-0597">Phosphoprotein</keyword>
<keyword id="KW-1185">Reference proteome</keyword>
<keyword id="KW-0796">Tight junction</keyword>
<keyword id="KW-0812">Transmembrane</keyword>
<keyword id="KW-1133">Transmembrane helix</keyword>
<name>CLD3_MOUSE</name>
<gene>
    <name type="primary">Cldn3</name>
    <name type="synonym">Cpetr2</name>
</gene>
<protein>
    <recommendedName>
        <fullName>Claudin-3</fullName>
    </recommendedName>
    <alternativeName>
        <fullName>Clostridium perfringens enterotoxin receptor 2</fullName>
        <shortName>CPE-R 2</shortName>
        <shortName>CPE-receptor 2</shortName>
    </alternativeName>
</protein>
<dbReference type="EMBL" id="AF095905">
    <property type="protein sequence ID" value="AAD14608.1"/>
    <property type="molecule type" value="mRNA"/>
</dbReference>
<dbReference type="EMBL" id="AF087821">
    <property type="protein sequence ID" value="AAD09756.1"/>
    <property type="molecule type" value="mRNA"/>
</dbReference>
<dbReference type="EMBL" id="BC012650">
    <property type="protein sequence ID" value="AAH12650.1"/>
    <property type="molecule type" value="mRNA"/>
</dbReference>
<dbReference type="CCDS" id="CCDS19729.1">
    <molecule id="Q9Z0G9-1"/>
</dbReference>
<dbReference type="RefSeq" id="NP_034032.1">
    <molecule id="Q9Z0G9-1"/>
    <property type="nucleotide sequence ID" value="NM_009902.4"/>
</dbReference>
<dbReference type="PDB" id="6AKE">
    <property type="method" value="X-ray"/>
    <property type="resolution" value="3.60 A"/>
    <property type="chains" value="A/C=1-183"/>
</dbReference>
<dbReference type="PDB" id="6AKF">
    <property type="method" value="X-ray"/>
    <property type="resolution" value="3.90 A"/>
    <property type="chains" value="A/C/E/G=1-183"/>
</dbReference>
<dbReference type="PDB" id="6AKG">
    <property type="method" value="X-ray"/>
    <property type="resolution" value="4.30 A"/>
    <property type="chains" value="A/C=1-183"/>
</dbReference>
<dbReference type="PDBsum" id="6AKE"/>
<dbReference type="PDBsum" id="6AKF"/>
<dbReference type="PDBsum" id="6AKG"/>
<dbReference type="SMR" id="Q9Z0G9"/>
<dbReference type="DIP" id="DIP-40779N"/>
<dbReference type="FunCoup" id="Q9Z0G9">
    <property type="interactions" value="280"/>
</dbReference>
<dbReference type="IntAct" id="Q9Z0G9">
    <property type="interactions" value="2"/>
</dbReference>
<dbReference type="MINT" id="Q9Z0G9"/>
<dbReference type="STRING" id="10090.ENSMUSP00000091799"/>
<dbReference type="iPTMnet" id="Q9Z0G9"/>
<dbReference type="PhosphoSitePlus" id="Q9Z0G9"/>
<dbReference type="SwissPalm" id="Q9Z0G9"/>
<dbReference type="jPOST" id="Q9Z0G9"/>
<dbReference type="PaxDb" id="10090-ENSMUSP00000091799"/>
<dbReference type="ProteomicsDB" id="283293">
    <molecule id="Q9Z0G9-1"/>
</dbReference>
<dbReference type="ProteomicsDB" id="283294">
    <molecule id="Q9Z0G9-2"/>
</dbReference>
<dbReference type="Antibodypedia" id="3638">
    <property type="antibodies" value="607 antibodies from 40 providers"/>
</dbReference>
<dbReference type="DNASU" id="12739"/>
<dbReference type="Ensembl" id="ENSMUST00000094245.4">
    <molecule id="Q9Z0G9-1"/>
    <property type="protein sequence ID" value="ENSMUSP00000091799.3"/>
    <property type="gene ID" value="ENSMUSG00000070473.5"/>
</dbReference>
<dbReference type="GeneID" id="12739"/>
<dbReference type="KEGG" id="mmu:12739"/>
<dbReference type="UCSC" id="uc008zxe.2">
    <molecule id="Q9Z0G9-1"/>
    <property type="organism name" value="mouse"/>
</dbReference>
<dbReference type="AGR" id="MGI:1329044"/>
<dbReference type="CTD" id="1365"/>
<dbReference type="MGI" id="MGI:1329044">
    <property type="gene designation" value="Cldn3"/>
</dbReference>
<dbReference type="VEuPathDB" id="HostDB:ENSMUSG00000070473"/>
<dbReference type="eggNOG" id="ENOG502QRZ8">
    <property type="taxonomic scope" value="Eukaryota"/>
</dbReference>
<dbReference type="GeneTree" id="ENSGT00940000162095"/>
<dbReference type="HOGENOM" id="CLU_076370_1_2_1"/>
<dbReference type="InParanoid" id="Q9Z0G9"/>
<dbReference type="OMA" id="WLCSIIC"/>
<dbReference type="OrthoDB" id="9899584at2759"/>
<dbReference type="PhylomeDB" id="Q9Z0G9"/>
<dbReference type="TreeFam" id="TF331936"/>
<dbReference type="BioGRID-ORCS" id="12739">
    <property type="hits" value="2 hits in 79 CRISPR screens"/>
</dbReference>
<dbReference type="ChiTaRS" id="Cldn3">
    <property type="organism name" value="mouse"/>
</dbReference>
<dbReference type="PRO" id="PR:Q9Z0G9"/>
<dbReference type="Proteomes" id="UP000000589">
    <property type="component" value="Chromosome 5"/>
</dbReference>
<dbReference type="RNAct" id="Q9Z0G9">
    <property type="molecule type" value="protein"/>
</dbReference>
<dbReference type="Bgee" id="ENSMUSG00000070473">
    <property type="expression patterns" value="Expressed in small intestine Peyer's patch and 149 other cell types or tissues"/>
</dbReference>
<dbReference type="ExpressionAtlas" id="Q9Z0G9">
    <property type="expression patterns" value="baseline and differential"/>
</dbReference>
<dbReference type="GO" id="GO:0016327">
    <property type="term" value="C:apicolateral plasma membrane"/>
    <property type="evidence" value="ECO:0000314"/>
    <property type="project" value="UniProtKB"/>
</dbReference>
<dbReference type="GO" id="GO:0005923">
    <property type="term" value="C:bicellular tight junction"/>
    <property type="evidence" value="ECO:0000314"/>
    <property type="project" value="UniProtKB"/>
</dbReference>
<dbReference type="GO" id="GO:0005911">
    <property type="term" value="C:cell-cell junction"/>
    <property type="evidence" value="ECO:0000314"/>
    <property type="project" value="ARUK-UCL"/>
</dbReference>
<dbReference type="GO" id="GO:0016328">
    <property type="term" value="C:lateral plasma membrane"/>
    <property type="evidence" value="ECO:0000314"/>
    <property type="project" value="MGI"/>
</dbReference>
<dbReference type="GO" id="GO:0016020">
    <property type="term" value="C:membrane"/>
    <property type="evidence" value="ECO:0000303"/>
    <property type="project" value="UniProtKB"/>
</dbReference>
<dbReference type="GO" id="GO:0005886">
    <property type="term" value="C:plasma membrane"/>
    <property type="evidence" value="ECO:0000314"/>
    <property type="project" value="UniProtKB"/>
</dbReference>
<dbReference type="GO" id="GO:0032991">
    <property type="term" value="C:protein-containing complex"/>
    <property type="evidence" value="ECO:0007669"/>
    <property type="project" value="Ensembl"/>
</dbReference>
<dbReference type="GO" id="GO:0070160">
    <property type="term" value="C:tight junction"/>
    <property type="evidence" value="ECO:0000314"/>
    <property type="project" value="UniProtKB"/>
</dbReference>
<dbReference type="GO" id="GO:0098632">
    <property type="term" value="F:cell-cell adhesion mediator activity"/>
    <property type="evidence" value="ECO:0007669"/>
    <property type="project" value="Ensembl"/>
</dbReference>
<dbReference type="GO" id="GO:0042802">
    <property type="term" value="F:identical protein binding"/>
    <property type="evidence" value="ECO:0000353"/>
    <property type="project" value="UniProtKB"/>
</dbReference>
<dbReference type="GO" id="GO:0005198">
    <property type="term" value="F:structural molecule activity"/>
    <property type="evidence" value="ECO:0007669"/>
    <property type="project" value="Ensembl"/>
</dbReference>
<dbReference type="GO" id="GO:0030036">
    <property type="term" value="P:actin cytoskeleton organization"/>
    <property type="evidence" value="ECO:0007669"/>
    <property type="project" value="Ensembl"/>
</dbReference>
<dbReference type="GO" id="GO:0070830">
    <property type="term" value="P:bicellular tight junction assembly"/>
    <property type="evidence" value="ECO:0007669"/>
    <property type="project" value="Ensembl"/>
</dbReference>
<dbReference type="GO" id="GO:0016338">
    <property type="term" value="P:calcium-independent cell-cell adhesion via plasma membrane cell-adhesion molecules"/>
    <property type="evidence" value="ECO:0000314"/>
    <property type="project" value="UniProtKB"/>
</dbReference>
<dbReference type="GO" id="GO:0034331">
    <property type="term" value="P:cell junction maintenance"/>
    <property type="evidence" value="ECO:0000315"/>
    <property type="project" value="ARUK-UCL"/>
</dbReference>
<dbReference type="GO" id="GO:0045217">
    <property type="term" value="P:cell-cell junction maintenance"/>
    <property type="evidence" value="ECO:0007669"/>
    <property type="project" value="Ensembl"/>
</dbReference>
<dbReference type="GO" id="GO:0003382">
    <property type="term" value="P:epithelial cell morphogenesis"/>
    <property type="evidence" value="ECO:0000314"/>
    <property type="project" value="UniProtKB"/>
</dbReference>
<dbReference type="GO" id="GO:0014045">
    <property type="term" value="P:establishment of endothelial blood-brain barrier"/>
    <property type="evidence" value="ECO:0000315"/>
    <property type="project" value="ARUK-UCL"/>
</dbReference>
<dbReference type="GO" id="GO:0030336">
    <property type="term" value="P:negative regulation of cell migration"/>
    <property type="evidence" value="ECO:0007669"/>
    <property type="project" value="Ensembl"/>
</dbReference>
<dbReference type="GO" id="GO:0008285">
    <property type="term" value="P:negative regulation of cell population proliferation"/>
    <property type="evidence" value="ECO:0007669"/>
    <property type="project" value="Ensembl"/>
</dbReference>
<dbReference type="GO" id="GO:0010629">
    <property type="term" value="P:negative regulation of gene expression"/>
    <property type="evidence" value="ECO:0007669"/>
    <property type="project" value="Ensembl"/>
</dbReference>
<dbReference type="GO" id="GO:2000186">
    <property type="term" value="P:negative regulation of phosphate transmembrane transport"/>
    <property type="evidence" value="ECO:0007669"/>
    <property type="project" value="Ensembl"/>
</dbReference>
<dbReference type="GO" id="GO:0030335">
    <property type="term" value="P:positive regulation of cell migration"/>
    <property type="evidence" value="ECO:0007669"/>
    <property type="project" value="Ensembl"/>
</dbReference>
<dbReference type="GO" id="GO:0010628">
    <property type="term" value="P:positive regulation of gene expression"/>
    <property type="evidence" value="ECO:0007669"/>
    <property type="project" value="Ensembl"/>
</dbReference>
<dbReference type="GO" id="GO:0090303">
    <property type="term" value="P:positive regulation of wound healing"/>
    <property type="evidence" value="ECO:0007669"/>
    <property type="project" value="Ensembl"/>
</dbReference>
<dbReference type="GO" id="GO:0022604">
    <property type="term" value="P:regulation of cell morphogenesis"/>
    <property type="evidence" value="ECO:0007669"/>
    <property type="project" value="Ensembl"/>
</dbReference>
<dbReference type="GO" id="GO:0090559">
    <property type="term" value="P:regulation of membrane permeability"/>
    <property type="evidence" value="ECO:0007669"/>
    <property type="project" value="Ensembl"/>
</dbReference>
<dbReference type="GO" id="GO:0150111">
    <property type="term" value="P:regulation of transepithelial transport"/>
    <property type="evidence" value="ECO:0007669"/>
    <property type="project" value="Ensembl"/>
</dbReference>
<dbReference type="GO" id="GO:0045471">
    <property type="term" value="P:response to ethanol"/>
    <property type="evidence" value="ECO:0007669"/>
    <property type="project" value="Ensembl"/>
</dbReference>
<dbReference type="GO" id="GO:0140459">
    <property type="term" value="P:response to Gram-positive bacterium"/>
    <property type="evidence" value="ECO:0007669"/>
    <property type="project" value="Ensembl"/>
</dbReference>
<dbReference type="GO" id="GO:0001666">
    <property type="term" value="P:response to hypoxia"/>
    <property type="evidence" value="ECO:0007669"/>
    <property type="project" value="Ensembl"/>
</dbReference>
<dbReference type="GO" id="GO:0003406">
    <property type="term" value="P:retinal pigment epithelium development"/>
    <property type="evidence" value="ECO:0007669"/>
    <property type="project" value="Ensembl"/>
</dbReference>
<dbReference type="FunFam" id="1.20.140.150:FF:000001">
    <property type="entry name" value="Claudin"/>
    <property type="match status" value="1"/>
</dbReference>
<dbReference type="Gene3D" id="1.20.140.150">
    <property type="match status" value="1"/>
</dbReference>
<dbReference type="InterPro" id="IPR006187">
    <property type="entry name" value="Claudin"/>
</dbReference>
<dbReference type="InterPro" id="IPR003549">
    <property type="entry name" value="Claudin3"/>
</dbReference>
<dbReference type="InterPro" id="IPR017974">
    <property type="entry name" value="Claudin_CS"/>
</dbReference>
<dbReference type="InterPro" id="IPR004031">
    <property type="entry name" value="PMP22/EMP/MP20/Claudin"/>
</dbReference>
<dbReference type="PANTHER" id="PTHR12002">
    <property type="entry name" value="CLAUDIN"/>
    <property type="match status" value="1"/>
</dbReference>
<dbReference type="Pfam" id="PF00822">
    <property type="entry name" value="PMP22_Claudin"/>
    <property type="match status" value="1"/>
</dbReference>
<dbReference type="PRINTS" id="PR01077">
    <property type="entry name" value="CLAUDIN"/>
</dbReference>
<dbReference type="PRINTS" id="PR01378">
    <property type="entry name" value="CLAUDIN3"/>
</dbReference>
<dbReference type="PROSITE" id="PS01346">
    <property type="entry name" value="CLAUDIN"/>
    <property type="match status" value="1"/>
</dbReference>
<reference key="1">
    <citation type="journal article" date="1998" name="Genomics">
        <title>Genes for the CPE receptor (CPETR1) and the human homolog of RVP1 (CPETR2) are localized within the Williams-Beuren syndrome deletion.</title>
        <authorList>
            <person name="Paperna T."/>
            <person name="Peoples R."/>
            <person name="Wang Y.K."/>
            <person name="Kaplan P."/>
            <person name="Francke U."/>
        </authorList>
    </citation>
    <scope>NUCLEOTIDE SEQUENCE [MRNA] (ISOFORM 1)</scope>
</reference>
<reference key="2">
    <citation type="journal article" date="1999" name="Proc. Natl. Acad. Sci. U.S.A.">
        <title>Claudin multigene family encoding four-transmembrane domain protein components of tight junction strands.</title>
        <authorList>
            <person name="Morita K."/>
            <person name="Furuse M."/>
            <person name="Fujimoto K."/>
            <person name="Tsukita S."/>
        </authorList>
    </citation>
    <scope>NUCLEOTIDE SEQUENCE [MRNA] (ISOFORM 1)</scope>
    <scope>SUBCELLULAR LOCATION</scope>
    <scope>TISSUE SPECIFICITY</scope>
    <source>
        <tissue>Liver</tissue>
    </source>
</reference>
<reference key="3">
    <citation type="journal article" date="2004" name="Genome Res.">
        <title>The status, quality, and expansion of the NIH full-length cDNA project: the Mammalian Gene Collection (MGC).</title>
        <authorList>
            <consortium name="The MGC Project Team"/>
        </authorList>
    </citation>
    <scope>NUCLEOTIDE SEQUENCE [LARGE SCALE MRNA] (ISOFORM 2)</scope>
    <source>
        <tissue>Colon</tissue>
    </source>
</reference>
<reference key="4">
    <citation type="journal article" date="1999" name="Curr. Biol.">
        <title>Ca(2+)-independent cell-adhesion activity of claudins, a family of integral membrane proteins localized at tight junctions.</title>
        <authorList>
            <person name="Kubota K."/>
            <person name="Furuse M."/>
            <person name="Sasaki H."/>
            <person name="Sonoda N."/>
            <person name="Fujita K."/>
            <person name="Nagafuchi A."/>
            <person name="Tsukita S."/>
        </authorList>
    </citation>
    <scope>FUNCTION</scope>
</reference>
<reference key="5">
    <citation type="journal article" date="1999" name="J. Cell Biol.">
        <title>Manner of interaction of heterogeneous claudin species within and between tight junction strands.</title>
        <authorList>
            <person name="Furuse M."/>
            <person name="Sasaki H."/>
            <person name="Tsukita S."/>
        </authorList>
    </citation>
    <scope>INTERACTION WITH CLDN1 AND CLDN2</scope>
</reference>
<reference key="6">
    <citation type="journal article" date="1999" name="J. Cell Biol.">
        <title>Direct binding of three tight junction-associated MAGUKs, ZO-1, ZO-2, and ZO-3, with the COOH termini of claudins.</title>
        <authorList>
            <person name="Itoh M."/>
            <person name="Furuse M."/>
            <person name="Morita K."/>
            <person name="Kubota K."/>
            <person name="Saitou M."/>
            <person name="Tsukita S."/>
        </authorList>
    </citation>
    <scope>INTERACTION WITH TJP1; TJP2 AND TJP3</scope>
</reference>
<reference key="7">
    <citation type="journal article" date="2007" name="Proc. Natl. Acad. Sci. U.S.A.">
        <title>Large-scale phosphorylation analysis of mouse liver.</title>
        <authorList>
            <person name="Villen J."/>
            <person name="Beausoleil S.A."/>
            <person name="Gerber S.A."/>
            <person name="Gygi S.P."/>
        </authorList>
    </citation>
    <scope>PHOSPHORYLATION [LARGE SCALE ANALYSIS] AT TYR-197</scope>
    <scope>IDENTIFICATION BY MASS SPECTROMETRY [LARGE SCALE ANALYSIS]</scope>
    <source>
        <tissue>Liver</tissue>
    </source>
</reference>
<reference key="8">
    <citation type="journal article" date="2010" name="Cell">
        <title>A tissue-specific atlas of mouse protein phosphorylation and expression.</title>
        <authorList>
            <person name="Huttlin E.L."/>
            <person name="Jedrychowski M.P."/>
            <person name="Elias J.E."/>
            <person name="Goswami T."/>
            <person name="Rad R."/>
            <person name="Beausoleil S.A."/>
            <person name="Villen J."/>
            <person name="Haas W."/>
            <person name="Sowa M.E."/>
            <person name="Gygi S.P."/>
        </authorList>
    </citation>
    <scope>IDENTIFICATION BY MASS SPECTROMETRY [LARGE SCALE ANALYSIS]</scope>
    <source>
        <tissue>Liver</tissue>
        <tissue>Pancreas</tissue>
    </source>
</reference>
<reference key="9">
    <citation type="journal article" date="2014" name="Am. J. Respir. Cell Mol. Biol.">
        <title>Knockout mice reveal key roles for claudin 18 in alveolar barrier properties and fluid homeostasis.</title>
        <authorList>
            <person name="Li G."/>
            <person name="Flodby P."/>
            <person name="Luo J."/>
            <person name="Kage H."/>
            <person name="Sipos A."/>
            <person name="Gao D."/>
            <person name="Ji Y."/>
            <person name="Beard L.L."/>
            <person name="Marconett C.N."/>
            <person name="DeMaio L."/>
            <person name="Kim Y.H."/>
            <person name="Kim K.J."/>
            <person name="Laird-Offringa I.A."/>
            <person name="Minoo P."/>
            <person name="Liebler J.M."/>
            <person name="Zhou B."/>
            <person name="Crandall E.D."/>
            <person name="Borok Z."/>
        </authorList>
    </citation>
    <scope>SUBCELLULAR LOCATION</scope>
    <scope>TISSUE SPECIFICITY</scope>
</reference>
<reference key="10">
    <citation type="journal article" date="2015" name="Science">
        <title>Tight junctions. Structural insight into tight junction disassembly by Clostridium perfringens enterotoxin.</title>
        <authorList>
            <person name="Saitoh Y."/>
            <person name="Suzuki H."/>
            <person name="Tani K."/>
            <person name="Nishikawa K."/>
            <person name="Irie K."/>
            <person name="Ogura Y."/>
            <person name="Tamura A."/>
            <person name="Tsukita S."/>
            <person name="Fujiyoshi Y."/>
        </authorList>
    </citation>
    <scope>INTERACTION WITH CLOSTRIDIUM PERFRINGENS CPE</scope>
</reference>
<organism>
    <name type="scientific">Mus musculus</name>
    <name type="common">Mouse</name>
    <dbReference type="NCBI Taxonomy" id="10090"/>
    <lineage>
        <taxon>Eukaryota</taxon>
        <taxon>Metazoa</taxon>
        <taxon>Chordata</taxon>
        <taxon>Craniata</taxon>
        <taxon>Vertebrata</taxon>
        <taxon>Euteleostomi</taxon>
        <taxon>Mammalia</taxon>
        <taxon>Eutheria</taxon>
        <taxon>Euarchontoglires</taxon>
        <taxon>Glires</taxon>
        <taxon>Rodentia</taxon>
        <taxon>Myomorpha</taxon>
        <taxon>Muroidea</taxon>
        <taxon>Muridae</taxon>
        <taxon>Murinae</taxon>
        <taxon>Mus</taxon>
        <taxon>Mus</taxon>
    </lineage>
</organism>